<proteinExistence type="evidence at protein level"/>
<gene>
    <name evidence="2 6" type="primary">IGLC7</name>
</gene>
<reference key="1">
    <citation type="journal article" date="1990" name="J. Exp. Med.">
        <title>Structure and expression of the human immunoglobulin lambda genes.</title>
        <authorList>
            <person name="Vasicek T.J."/>
            <person name="Leder P."/>
        </authorList>
    </citation>
    <scope>NUCLEOTIDE SEQUENCE [GENOMIC DNA] (IMGT ALLELE IGLC7*01)</scope>
</reference>
<reference key="2">
    <citation type="journal article" date="1997" name="Genome Res.">
        <title>One-megabase sequence analysis of the human immunoglobulin lambda gene locus.</title>
        <authorList>
            <person name="Kawasaki K."/>
            <person name="Minoshima S."/>
            <person name="Nakato E."/>
            <person name="Shibuya K."/>
            <person name="Shintani A."/>
            <person name="Schmeits J.L."/>
            <person name="Wang J."/>
            <person name="Shimizu N."/>
        </authorList>
    </citation>
    <scope>NUCLEOTIDE SEQUENCE [GENOMIC DNA] (IMGT ALLELE IGLC7*01)</scope>
</reference>
<reference key="3">
    <citation type="journal article" date="1999" name="Nature">
        <title>The DNA sequence of human chromosome 22.</title>
        <authorList>
            <person name="Dunham I."/>
            <person name="Hunt A.R."/>
            <person name="Collins J.E."/>
            <person name="Bruskiewich R."/>
            <person name="Beare D.M."/>
            <person name="Clamp M."/>
            <person name="Smink L.J."/>
            <person name="Ainscough R."/>
            <person name="Almeida J.P."/>
            <person name="Babbage A.K."/>
            <person name="Bagguley C."/>
            <person name="Bailey J."/>
            <person name="Barlow K.F."/>
            <person name="Bates K.N."/>
            <person name="Beasley O.P."/>
            <person name="Bird C.P."/>
            <person name="Blakey S.E."/>
            <person name="Bridgeman A.M."/>
            <person name="Buck D."/>
            <person name="Burgess J."/>
            <person name="Burrill W.D."/>
            <person name="Burton J."/>
            <person name="Carder C."/>
            <person name="Carter N.P."/>
            <person name="Chen Y."/>
            <person name="Clark G."/>
            <person name="Clegg S.M."/>
            <person name="Cobley V.E."/>
            <person name="Cole C.G."/>
            <person name="Collier R.E."/>
            <person name="Connor R."/>
            <person name="Conroy D."/>
            <person name="Corby N.R."/>
            <person name="Coville G.J."/>
            <person name="Cox A.V."/>
            <person name="Davis J."/>
            <person name="Dawson E."/>
            <person name="Dhami P.D."/>
            <person name="Dockree C."/>
            <person name="Dodsworth S.J."/>
            <person name="Durbin R.M."/>
            <person name="Ellington A.G."/>
            <person name="Evans K.L."/>
            <person name="Fey J.M."/>
            <person name="Fleming K."/>
            <person name="French L."/>
            <person name="Garner A.A."/>
            <person name="Gilbert J.G.R."/>
            <person name="Goward M.E."/>
            <person name="Grafham D.V."/>
            <person name="Griffiths M.N.D."/>
            <person name="Hall C."/>
            <person name="Hall R.E."/>
            <person name="Hall-Tamlyn G."/>
            <person name="Heathcott R.W."/>
            <person name="Ho S."/>
            <person name="Holmes S."/>
            <person name="Hunt S.E."/>
            <person name="Jones M.C."/>
            <person name="Kershaw J."/>
            <person name="Kimberley A.M."/>
            <person name="King A."/>
            <person name="Laird G.K."/>
            <person name="Langford C.F."/>
            <person name="Leversha M.A."/>
            <person name="Lloyd C."/>
            <person name="Lloyd D.M."/>
            <person name="Martyn I.D."/>
            <person name="Mashreghi-Mohammadi M."/>
            <person name="Matthews L.H."/>
            <person name="Mccann O.T."/>
            <person name="Mcclay J."/>
            <person name="Mclaren S."/>
            <person name="McMurray A.A."/>
            <person name="Milne S.A."/>
            <person name="Mortimore B.J."/>
            <person name="Odell C.N."/>
            <person name="Pavitt R."/>
            <person name="Pearce A.V."/>
            <person name="Pearson D."/>
            <person name="Phillimore B.J.C.T."/>
            <person name="Phillips S.H."/>
            <person name="Plumb R.W."/>
            <person name="Ramsay H."/>
            <person name="Ramsey Y."/>
            <person name="Rogers L."/>
            <person name="Ross M.T."/>
            <person name="Scott C.E."/>
            <person name="Sehra H.K."/>
            <person name="Skuce C.D."/>
            <person name="Smalley S."/>
            <person name="Smith M.L."/>
            <person name="Soderlund C."/>
            <person name="Spragon L."/>
            <person name="Steward C.A."/>
            <person name="Sulston J.E."/>
            <person name="Swann R.M."/>
            <person name="Vaudin M."/>
            <person name="Wall M."/>
            <person name="Wallis J.M."/>
            <person name="Whiteley M.N."/>
            <person name="Willey D.L."/>
            <person name="Williams L."/>
            <person name="Williams S.A."/>
            <person name="Williamson H."/>
            <person name="Wilmer T.E."/>
            <person name="Wilming L."/>
            <person name="Wright C.L."/>
            <person name="Hubbard T."/>
            <person name="Bentley D.R."/>
            <person name="Beck S."/>
            <person name="Rogers J."/>
            <person name="Shimizu N."/>
            <person name="Minoshima S."/>
            <person name="Kawasaki K."/>
            <person name="Sasaki T."/>
            <person name="Asakawa S."/>
            <person name="Kudoh J."/>
            <person name="Shintani A."/>
            <person name="Shibuya K."/>
            <person name="Yoshizaki Y."/>
            <person name="Aoki N."/>
            <person name="Mitsuyama S."/>
            <person name="Roe B.A."/>
            <person name="Chen F."/>
            <person name="Chu L."/>
            <person name="Crabtree J."/>
            <person name="Deschamps S."/>
            <person name="Do A."/>
            <person name="Do T."/>
            <person name="Dorman A."/>
            <person name="Fang F."/>
            <person name="Fu Y."/>
            <person name="Hu P."/>
            <person name="Hua A."/>
            <person name="Kenton S."/>
            <person name="Lai H."/>
            <person name="Lao H.I."/>
            <person name="Lewis J."/>
            <person name="Lewis S."/>
            <person name="Lin S.-P."/>
            <person name="Loh P."/>
            <person name="Malaj E."/>
            <person name="Nguyen T."/>
            <person name="Pan H."/>
            <person name="Phan S."/>
            <person name="Qi S."/>
            <person name="Qian Y."/>
            <person name="Ray L."/>
            <person name="Ren Q."/>
            <person name="Shaull S."/>
            <person name="Sloan D."/>
            <person name="Song L."/>
            <person name="Wang Q."/>
            <person name="Wang Y."/>
            <person name="Wang Z."/>
            <person name="White J."/>
            <person name="Willingham D."/>
            <person name="Wu H."/>
            <person name="Yao Z."/>
            <person name="Zhan M."/>
            <person name="Zhang G."/>
            <person name="Chissoe S."/>
            <person name="Murray J."/>
            <person name="Miller N."/>
            <person name="Minx P."/>
            <person name="Fulton R."/>
            <person name="Johnson D."/>
            <person name="Bemis G."/>
            <person name="Bentley D."/>
            <person name="Bradshaw H."/>
            <person name="Bourne S."/>
            <person name="Cordes M."/>
            <person name="Du Z."/>
            <person name="Fulton L."/>
            <person name="Goela D."/>
            <person name="Graves T."/>
            <person name="Hawkins J."/>
            <person name="Hinds K."/>
            <person name="Kemp K."/>
            <person name="Latreille P."/>
            <person name="Layman D."/>
            <person name="Ozersky P."/>
            <person name="Rohlfing T."/>
            <person name="Scheet P."/>
            <person name="Walker C."/>
            <person name="Wamsley A."/>
            <person name="Wohldmann P."/>
            <person name="Pepin K."/>
            <person name="Nelson J."/>
            <person name="Korf I."/>
            <person name="Bedell J.A."/>
            <person name="Hillier L.W."/>
            <person name="Mardis E."/>
            <person name="Waterston R."/>
            <person name="Wilson R."/>
            <person name="Emanuel B.S."/>
            <person name="Shaikh T."/>
            <person name="Kurahashi H."/>
            <person name="Saitta S."/>
            <person name="Budarf M.L."/>
            <person name="McDermid H.E."/>
            <person name="Johnson A."/>
            <person name="Wong A.C.C."/>
            <person name="Morrow B.E."/>
            <person name="Edelmann L."/>
            <person name="Kim U.J."/>
            <person name="Shizuya H."/>
            <person name="Simon M.I."/>
            <person name="Dumanski J.P."/>
            <person name="Peyrard M."/>
            <person name="Kedra D."/>
            <person name="Seroussi E."/>
            <person name="Fransson I."/>
            <person name="Tapia I."/>
            <person name="Bruder C.E."/>
            <person name="O'Brien K.P."/>
            <person name="Wilkinson P."/>
            <person name="Bodenteich A."/>
            <person name="Hartman K."/>
            <person name="Hu X."/>
            <person name="Khan A.S."/>
            <person name="Lane L."/>
            <person name="Tilahun Y."/>
            <person name="Wright H."/>
        </authorList>
    </citation>
    <scope>NUCLEOTIDE SEQUENCE [LARGE SCALE GENOMIC DNA] (IMGT ALLELE IGLC7*03)</scope>
</reference>
<reference key="4">
    <citation type="submission" date="2005-07" db="EMBL/GenBank/DDBJ databases">
        <authorList>
            <person name="Mural R.J."/>
            <person name="Istrail S."/>
            <person name="Sutton G.G."/>
            <person name="Florea L."/>
            <person name="Halpern A.L."/>
            <person name="Mobarry C.M."/>
            <person name="Lippert R."/>
            <person name="Walenz B."/>
            <person name="Shatkay H."/>
            <person name="Dew I."/>
            <person name="Miller J.R."/>
            <person name="Flanigan M.J."/>
            <person name="Edwards N.J."/>
            <person name="Bolanos R."/>
            <person name="Fasulo D."/>
            <person name="Halldorsson B.V."/>
            <person name="Hannenhalli S."/>
            <person name="Turner R."/>
            <person name="Yooseph S."/>
            <person name="Lu F."/>
            <person name="Nusskern D.R."/>
            <person name="Shue B.C."/>
            <person name="Zheng X.H."/>
            <person name="Zhong F."/>
            <person name="Delcher A.L."/>
            <person name="Huson D.H."/>
            <person name="Kravitz S.A."/>
            <person name="Mouchard L."/>
            <person name="Reinert K."/>
            <person name="Remington K.A."/>
            <person name="Clark A.G."/>
            <person name="Waterman M.S."/>
            <person name="Eichler E.E."/>
            <person name="Adams M.D."/>
            <person name="Hunkapiller M.W."/>
            <person name="Myers E.W."/>
            <person name="Venter J.C."/>
        </authorList>
    </citation>
    <scope>NUCLEOTIDE SEQUENCE [LARGE SCALE GENOMIC DNA] (IMGT ALLELE IGLC7*01)</scope>
</reference>
<reference key="5">
    <citation type="journal article" date="2001" name="Exp. Clin. Immunogenet.">
        <title>Nomenclature of the human immunoglobulin lambda (IGL) genes.</title>
        <authorList>
            <person name="Lefranc M.P."/>
        </authorList>
    </citation>
    <scope>NOMENCLATURE</scope>
</reference>
<reference key="6">
    <citation type="book" date="2001" name="The Immunoglobulin FactsBook.">
        <title>The Immunoglobulin FactsBook.</title>
        <editorList>
            <person name="Lefranc M.P."/>
            <person name="Lefranc G."/>
        </editorList>
        <authorList>
            <person name="Lefranc M.P."/>
            <person name="Lefranc G."/>
        </authorList>
    </citation>
    <scope>NOMENCLATURE</scope>
</reference>
<reference key="7">
    <citation type="book" date="2004" name="Molecular Biology of B Cells">
        <title>Immunoglobulin lambda (IGL) genes of human and mouse.</title>
        <editorList>
            <person name="Honjo T."/>
            <person name="Alt F.W."/>
            <person name="Neuberger M."/>
        </editorList>
        <authorList>
            <person name="Lefranc M.-P."/>
            <person name="Lefranc G."/>
        </authorList>
    </citation>
    <scope>SEROLOGICAL ISOTYPE</scope>
</reference>
<reference key="8">
    <citation type="journal article" date="2007" name="Annu. Rev. Genet.">
        <title>Immunoglobulin somatic hypermutation.</title>
        <authorList>
            <person name="Teng G."/>
            <person name="Papavasiliou F.N."/>
        </authorList>
    </citation>
    <scope>REVIEW ON SOMATIC HYPERMUTATION</scope>
</reference>
<reference key="9">
    <citation type="journal article" date="2010" name="J. Allergy Clin. Immunol.">
        <title>Structure and function of immunoglobulins.</title>
        <authorList>
            <person name="Schroeder H.W. Jr."/>
            <person name="Cavacini L."/>
        </authorList>
    </citation>
    <scope>REVIEW ON IMMUNOGLOBULINS</scope>
</reference>
<reference key="10">
    <citation type="journal article" date="2012" name="Nat. Rev. Immunol.">
        <title>Molecular programming of B cell memory.</title>
        <authorList>
            <person name="McHeyzer-Williams M."/>
            <person name="Okitsu S."/>
            <person name="Wang N."/>
            <person name="McHeyzer-Williams L."/>
        </authorList>
    </citation>
    <scope>REVIEW ON FUNCTION</scope>
</reference>
<accession>A0M8Q6</accession>
<accession>A0A075B6L1</accession>
<keyword id="KW-1064">Adaptive immunity</keyword>
<keyword id="KW-1003">Cell membrane</keyword>
<keyword id="KW-1015">Disulfide bond</keyword>
<keyword id="KW-0391">Immunity</keyword>
<keyword id="KW-1280">Immunoglobulin</keyword>
<keyword id="KW-0393">Immunoglobulin domain</keyword>
<keyword id="KW-0472">Membrane</keyword>
<keyword id="KW-1267">Proteomics identification</keyword>
<keyword id="KW-1185">Reference proteome</keyword>
<keyword id="KW-0964">Secreted</keyword>
<feature type="chain" id="PRO_0000393470" description="Immunoglobulin lambda constant 7">
    <location>
        <begin position="1" status="less than"/>
        <end position="106"/>
    </location>
</feature>
<feature type="domain" description="Ig-like" evidence="1">
    <location>
        <begin position="7"/>
        <end position="101"/>
    </location>
</feature>
<feature type="disulfide bond" evidence="1">
    <location>
        <begin position="28"/>
        <end position="87"/>
    </location>
</feature>
<feature type="disulfide bond" description="Interchain (with heavy chain)">
    <location>
        <position position="105"/>
    </location>
</feature>
<feature type="sequence variant" id="VAR_077896" description="In IMGT ALLELE IGLC7*01.">
    <original>N</original>
    <variation>Y</variation>
    <location>
        <position position="34"/>
    </location>
</feature>
<feature type="non-terminal residue">
    <location>
        <position position="1"/>
    </location>
</feature>
<comment type="function">
    <text evidence="3 4 5">Constant region of immunoglobulin light chains. Immunoglobulins, also known as antibodies, are membrane-bound or secreted glycoproteins produced by B lymphocytes. In the recognition phase of humoral immunity, the membrane-bound immunoglobulins serve as receptors which, upon binding of a specific antigen, trigger the clonal expansion and differentiation of B lymphocytes into immunoglobulins-secreting plasma cells. Secreted immunoglobulins mediate the effector phase of humoral immunity, which results in the elimination of bound antigens (PubMed:20176268, PubMed:22158414). The antigen binding site is formed by the variable domain of one heavy chain, together with that of its associated light chain. Thus, each immunoglobulin has two antigen binding sites with remarkable affinity for a particular antigen. The variable domains are assembled by a process called V-(D)-J rearrangement and can then be subjected to somatic hypermutations which, after exposure to antigen and selection, allow affinity maturation for a particular antigen (PubMed:17576170, PubMed:20176268).</text>
</comment>
<comment type="subunit">
    <text evidence="4">Immunoglobulins are composed of two identical heavy chains and two identical light chains; disulfide-linked.</text>
</comment>
<comment type="subcellular location">
    <subcellularLocation>
        <location evidence="4 5">Secreted</location>
    </subcellularLocation>
    <subcellularLocation>
        <location evidence="4 5">Cell membrane</location>
    </subcellularLocation>
</comment>
<comment type="polymorphism">
    <text evidence="8">There are several alleles. The sequence shown is that of IMGT allele IGLC7*03.</text>
</comment>
<comment type="miscellaneous">
    <text evidence="7">Displays the following serological isotype: Ke+, Oz- and two of the three characteristic amino acids of Mgc-isotype: Ala-6 and Ser-8 but instead of Thr-57 it displays Lys-57. Ke+ has Gly-46 and Oz- has Arg-83.</text>
</comment>
<comment type="caution">
    <text evidence="8">For an example of a full-length immunoglobulin lambda light chain see AC P0DOX8.</text>
</comment>
<comment type="sequence caution" evidence="8">
    <conflict type="erroneous initiation">
        <sequence resource="EMBL-CDS" id="BAA20016"/>
    </conflict>
    <text>Truncated N-terminus.</text>
</comment>
<comment type="sequence caution" evidence="8">
    <conflict type="erroneous initiation">
        <sequence resource="EMBL-CDS" id="CAA36053"/>
    </conflict>
    <text>Truncated N-terminus.</text>
</comment>
<comment type="sequence caution" evidence="8">
    <conflict type="erroneous initiation">
        <sequence resource="EMBL-CDS" id="EAW59556"/>
    </conflict>
    <text>Truncated N-terminus.</text>
</comment>
<dbReference type="EMBL" id="X51755">
    <property type="protein sequence ID" value="CAA36053.1"/>
    <property type="status" value="ALT_INIT"/>
    <property type="molecule type" value="Genomic_DNA"/>
</dbReference>
<dbReference type="EMBL" id="D87017">
    <property type="protein sequence ID" value="BAA20016.1"/>
    <property type="status" value="ALT_INIT"/>
    <property type="molecule type" value="Genomic_DNA"/>
</dbReference>
<dbReference type="EMBL" id="AC245028">
    <property type="status" value="NOT_ANNOTATED_CDS"/>
    <property type="molecule type" value="Genomic_DNA"/>
</dbReference>
<dbReference type="EMBL" id="CH471095">
    <property type="protein sequence ID" value="EAW59556.1"/>
    <property type="status" value="ALT_INIT"/>
    <property type="molecule type" value="Genomic_DNA"/>
</dbReference>
<dbReference type="SMR" id="A0M8Q6"/>
<dbReference type="ComplexPortal" id="CPX-6910">
    <property type="entry name" value="IgD - Ig lambda 7 immunoglobulin complex, constant regions"/>
</dbReference>
<dbReference type="ComplexPortal" id="CPX-6927">
    <property type="entry name" value="IgM - Ig lambda 7 immunoglobulin complex, constant regions"/>
</dbReference>
<dbReference type="ComplexPortal" id="CPX-6935">
    <property type="entry name" value="IgG1 - Ig lambda 7 immunoglobulin complex, constant regions"/>
</dbReference>
<dbReference type="ComplexPortal" id="CPX-6942">
    <property type="entry name" value="IgG2 - Ig lambda 7 immunoglobulin complex, constant regions"/>
</dbReference>
<dbReference type="ComplexPortal" id="CPX-6948">
    <property type="entry name" value="IgG3 - Ig lambda 7 immunoglobulin complex, constant regions"/>
</dbReference>
<dbReference type="ComplexPortal" id="CPX-6954">
    <property type="entry name" value="IgG4 - Ig lambda 7 immunoglobulin complex, constant regions"/>
</dbReference>
<dbReference type="ComplexPortal" id="CPX-6961">
    <property type="entry name" value="IgA1 - Ig lambda 7 immunoglobulin complex, constant regions"/>
</dbReference>
<dbReference type="ComplexPortal" id="CPX-6967">
    <property type="entry name" value="IgA2 - Ig lambda 7 immunoglobulin complex, constant regions"/>
</dbReference>
<dbReference type="ComplexPortal" id="CPX-6974">
    <property type="entry name" value="IgE - Ig lambda 7 immunoglobulin complex, constant regions"/>
</dbReference>
<dbReference type="FunCoup" id="A0M8Q6">
    <property type="interactions" value="106"/>
</dbReference>
<dbReference type="IntAct" id="A0M8Q6">
    <property type="interactions" value="9"/>
</dbReference>
<dbReference type="IMGT_GENE-DB" id="IGLC7"/>
<dbReference type="GlyGen" id="A0M8Q6">
    <property type="glycosylation" value="1 site"/>
</dbReference>
<dbReference type="BioMuta" id="IGLC7"/>
<dbReference type="jPOST" id="A0M8Q6"/>
<dbReference type="MassIVE" id="A0M8Q6"/>
<dbReference type="ProteomicsDB" id="44"/>
<dbReference type="Pumba" id="A0M8Q6"/>
<dbReference type="UCSC" id="uc062ceh.1">
    <property type="organism name" value="human"/>
</dbReference>
<dbReference type="AGR" id="HGNC:5861"/>
<dbReference type="GeneCards" id="IGLC7"/>
<dbReference type="HGNC" id="HGNC:5861">
    <property type="gene designation" value="IGLC7"/>
</dbReference>
<dbReference type="neXtProt" id="NX_A0M8Q6"/>
<dbReference type="InParanoid" id="A0M8Q6"/>
<dbReference type="OrthoDB" id="9049585at2759"/>
<dbReference type="PAN-GO" id="A0M8Q6">
    <property type="GO annotations" value="11 GO annotations based on evolutionary models"/>
</dbReference>
<dbReference type="PhylomeDB" id="A0M8Q6"/>
<dbReference type="PathwayCommons" id="A0M8Q6"/>
<dbReference type="Reactome" id="R-HSA-166663">
    <property type="pathway name" value="Initial triggering of complement"/>
</dbReference>
<dbReference type="Reactome" id="R-HSA-173623">
    <property type="pathway name" value="Classical antibody-mediated complement activation"/>
</dbReference>
<dbReference type="Reactome" id="R-HSA-198933">
    <property type="pathway name" value="Immunoregulatory interactions between a Lymphoid and a non-Lymphoid cell"/>
</dbReference>
<dbReference type="Reactome" id="R-HSA-202733">
    <property type="pathway name" value="Cell surface interactions at the vascular wall"/>
</dbReference>
<dbReference type="Reactome" id="R-HSA-2029481">
    <property type="pathway name" value="FCGR activation"/>
</dbReference>
<dbReference type="Reactome" id="R-HSA-2029482">
    <property type="pathway name" value="Regulation of actin dynamics for phagocytic cup formation"/>
</dbReference>
<dbReference type="Reactome" id="R-HSA-2029485">
    <property type="pathway name" value="Role of phospholipids in phagocytosis"/>
</dbReference>
<dbReference type="Reactome" id="R-HSA-2168880">
    <property type="pathway name" value="Scavenging of heme from plasma"/>
</dbReference>
<dbReference type="Reactome" id="R-HSA-2454202">
    <property type="pathway name" value="Fc epsilon receptor (FCERI) signaling"/>
</dbReference>
<dbReference type="Reactome" id="R-HSA-2730905">
    <property type="pathway name" value="Role of LAT2/NTAL/LAB on calcium mobilization"/>
</dbReference>
<dbReference type="Reactome" id="R-HSA-2871796">
    <property type="pathway name" value="FCERI mediated MAPK activation"/>
</dbReference>
<dbReference type="Reactome" id="R-HSA-2871809">
    <property type="pathway name" value="FCERI mediated Ca+2 mobilization"/>
</dbReference>
<dbReference type="Reactome" id="R-HSA-2871837">
    <property type="pathway name" value="FCERI mediated NF-kB activation"/>
</dbReference>
<dbReference type="Reactome" id="R-HSA-5690714">
    <property type="pathway name" value="CD22 mediated BCR regulation"/>
</dbReference>
<dbReference type="Reactome" id="R-HSA-9664323">
    <property type="pathway name" value="FCGR3A-mediated IL10 synthesis"/>
</dbReference>
<dbReference type="Reactome" id="R-HSA-9664422">
    <property type="pathway name" value="FCGR3A-mediated phagocytosis"/>
</dbReference>
<dbReference type="Reactome" id="R-HSA-9679191">
    <property type="pathway name" value="Potential therapeutics for SARS"/>
</dbReference>
<dbReference type="Reactome" id="R-HSA-977606">
    <property type="pathway name" value="Regulation of Complement cascade"/>
</dbReference>
<dbReference type="Reactome" id="R-HSA-983695">
    <property type="pathway name" value="Antigen activates B Cell Receptor (BCR) leading to generation of second messengers"/>
</dbReference>
<dbReference type="SignaLink" id="A0M8Q6"/>
<dbReference type="ChiTaRS" id="IGLC7">
    <property type="organism name" value="human"/>
</dbReference>
<dbReference type="Pharos" id="A0M8Q6">
    <property type="development level" value="Tdark"/>
</dbReference>
<dbReference type="PRO" id="PR:A0M8Q6"/>
<dbReference type="Proteomes" id="UP000005640">
    <property type="component" value="Unplaced"/>
</dbReference>
<dbReference type="RNAct" id="A0M8Q6">
    <property type="molecule type" value="protein"/>
</dbReference>
<dbReference type="GO" id="GO:0005576">
    <property type="term" value="C:extracellular region"/>
    <property type="evidence" value="ECO:0000304"/>
    <property type="project" value="Reactome"/>
</dbReference>
<dbReference type="GO" id="GO:0005615">
    <property type="term" value="C:extracellular space"/>
    <property type="evidence" value="ECO:0000303"/>
    <property type="project" value="ComplexPortal"/>
</dbReference>
<dbReference type="GO" id="GO:0071745">
    <property type="term" value="C:IgA immunoglobulin complex"/>
    <property type="evidence" value="ECO:0000303"/>
    <property type="project" value="ComplexPortal"/>
</dbReference>
<dbReference type="GO" id="GO:0071738">
    <property type="term" value="C:IgD immunoglobulin complex"/>
    <property type="evidence" value="ECO:0000303"/>
    <property type="project" value="ComplexPortal"/>
</dbReference>
<dbReference type="GO" id="GO:0071742">
    <property type="term" value="C:IgE immunoglobulin complex"/>
    <property type="evidence" value="ECO:0000303"/>
    <property type="project" value="ComplexPortal"/>
</dbReference>
<dbReference type="GO" id="GO:0071735">
    <property type="term" value="C:IgG immunoglobulin complex"/>
    <property type="evidence" value="ECO:0000318"/>
    <property type="project" value="GO_Central"/>
</dbReference>
<dbReference type="GO" id="GO:0071753">
    <property type="term" value="C:IgM immunoglobulin complex"/>
    <property type="evidence" value="ECO:0000303"/>
    <property type="project" value="ComplexPortal"/>
</dbReference>
<dbReference type="GO" id="GO:0005886">
    <property type="term" value="C:plasma membrane"/>
    <property type="evidence" value="ECO:0000304"/>
    <property type="project" value="Reactome"/>
</dbReference>
<dbReference type="GO" id="GO:0003823">
    <property type="term" value="F:antigen binding"/>
    <property type="evidence" value="ECO:0000318"/>
    <property type="project" value="GO_Central"/>
</dbReference>
<dbReference type="GO" id="GO:0002250">
    <property type="term" value="P:adaptive immune response"/>
    <property type="evidence" value="ECO:0000303"/>
    <property type="project" value="ComplexPortal"/>
</dbReference>
<dbReference type="GO" id="GO:0050853">
    <property type="term" value="P:B cell receptor signaling pathway"/>
    <property type="evidence" value="ECO:0000303"/>
    <property type="project" value="ComplexPortal"/>
</dbReference>
<dbReference type="GO" id="GO:0016064">
    <property type="term" value="P:immunoglobulin mediated immune response"/>
    <property type="evidence" value="ECO:0000318"/>
    <property type="project" value="GO_Central"/>
</dbReference>
<dbReference type="CDD" id="cd07699">
    <property type="entry name" value="IgC1_L"/>
    <property type="match status" value="1"/>
</dbReference>
<dbReference type="FunFam" id="2.60.40.10:FF:000283">
    <property type="entry name" value="Immunoglobulin kappa constant"/>
    <property type="match status" value="1"/>
</dbReference>
<dbReference type="Gene3D" id="2.60.40.10">
    <property type="entry name" value="Immunoglobulins"/>
    <property type="match status" value="1"/>
</dbReference>
<dbReference type="InterPro" id="IPR007110">
    <property type="entry name" value="Ig-like_dom"/>
</dbReference>
<dbReference type="InterPro" id="IPR036179">
    <property type="entry name" value="Ig-like_dom_sf"/>
</dbReference>
<dbReference type="InterPro" id="IPR013783">
    <property type="entry name" value="Ig-like_fold"/>
</dbReference>
<dbReference type="InterPro" id="IPR003006">
    <property type="entry name" value="Ig/MHC_CS"/>
</dbReference>
<dbReference type="InterPro" id="IPR003597">
    <property type="entry name" value="Ig_C1-set"/>
</dbReference>
<dbReference type="InterPro" id="IPR050160">
    <property type="entry name" value="MHC/Immunoglobulin"/>
</dbReference>
<dbReference type="PANTHER" id="PTHR19944:SF98">
    <property type="entry name" value="IG-LIKE DOMAIN-CONTAINING PROTEIN"/>
    <property type="match status" value="1"/>
</dbReference>
<dbReference type="PANTHER" id="PTHR19944">
    <property type="entry name" value="MHC CLASS II-RELATED"/>
    <property type="match status" value="1"/>
</dbReference>
<dbReference type="Pfam" id="PF07654">
    <property type="entry name" value="C1-set"/>
    <property type="match status" value="1"/>
</dbReference>
<dbReference type="SMART" id="SM00407">
    <property type="entry name" value="IGc1"/>
    <property type="match status" value="1"/>
</dbReference>
<dbReference type="SUPFAM" id="SSF48726">
    <property type="entry name" value="Immunoglobulin"/>
    <property type="match status" value="1"/>
</dbReference>
<dbReference type="PROSITE" id="PS50835">
    <property type="entry name" value="IG_LIKE"/>
    <property type="match status" value="1"/>
</dbReference>
<dbReference type="PROSITE" id="PS00290">
    <property type="entry name" value="IG_MHC"/>
    <property type="match status" value="1"/>
</dbReference>
<sequence length="106" mass="11254">GQPKAAPSVTLFPPSSEELQANKATLVCLVSDFNPGAVTVAWKADGSPVKVGVETTKPSKQSNNKYAASSYLSLTPEQWKSHRSYSCRVTHEGSTVEKTVAPAECS</sequence>
<evidence type="ECO:0000255" key="1">
    <source>
        <dbReference type="PROSITE-ProRule" id="PRU00114"/>
    </source>
</evidence>
<evidence type="ECO:0000303" key="2">
    <source>
    </source>
</evidence>
<evidence type="ECO:0000303" key="3">
    <source>
    </source>
</evidence>
<evidence type="ECO:0000303" key="4">
    <source>
    </source>
</evidence>
<evidence type="ECO:0000303" key="5">
    <source>
    </source>
</evidence>
<evidence type="ECO:0000303" key="6">
    <source ref="6"/>
</evidence>
<evidence type="ECO:0000303" key="7">
    <source ref="7"/>
</evidence>
<evidence type="ECO:0000305" key="8"/>
<organism>
    <name type="scientific">Homo sapiens</name>
    <name type="common">Human</name>
    <dbReference type="NCBI Taxonomy" id="9606"/>
    <lineage>
        <taxon>Eukaryota</taxon>
        <taxon>Metazoa</taxon>
        <taxon>Chordata</taxon>
        <taxon>Craniata</taxon>
        <taxon>Vertebrata</taxon>
        <taxon>Euteleostomi</taxon>
        <taxon>Mammalia</taxon>
        <taxon>Eutheria</taxon>
        <taxon>Euarchontoglires</taxon>
        <taxon>Primates</taxon>
        <taxon>Haplorrhini</taxon>
        <taxon>Catarrhini</taxon>
        <taxon>Hominidae</taxon>
        <taxon>Homo</taxon>
    </lineage>
</organism>
<protein>
    <recommendedName>
        <fullName evidence="2 6">Immunoglobulin lambda constant 7</fullName>
    </recommendedName>
    <alternativeName>
        <fullName>Ig lambda-7 chain C region</fullName>
    </alternativeName>
</protein>
<name>IGLC7_HUMAN</name>